<feature type="chain" id="PRO_1000138740" description="Protein-methionine-sulfoxide reductase heme-binding subunit MsrQ">
    <location>
        <begin position="1"/>
        <end position="199"/>
    </location>
</feature>
<feature type="transmembrane region" description="Helical" evidence="1">
    <location>
        <begin position="10"/>
        <end position="30"/>
    </location>
</feature>
<feature type="transmembrane region" description="Helical" evidence="1">
    <location>
        <begin position="82"/>
        <end position="102"/>
    </location>
</feature>
<feature type="transmembrane region" description="Helical" evidence="1">
    <location>
        <begin position="116"/>
        <end position="136"/>
    </location>
</feature>
<feature type="transmembrane region" description="Helical" evidence="1">
    <location>
        <begin position="153"/>
        <end position="173"/>
    </location>
</feature>
<reference key="1">
    <citation type="journal article" date="2011" name="J. Bacteriol.">
        <title>Comparative genomics of 28 Salmonella enterica isolates: evidence for CRISPR-mediated adaptive sublineage evolution.</title>
        <authorList>
            <person name="Fricke W.F."/>
            <person name="Mammel M.K."/>
            <person name="McDermott P.F."/>
            <person name="Tartera C."/>
            <person name="White D.G."/>
            <person name="Leclerc J.E."/>
            <person name="Ravel J."/>
            <person name="Cebula T.A."/>
        </authorList>
    </citation>
    <scope>NUCLEOTIDE SEQUENCE [LARGE SCALE GENOMIC DNA]</scope>
    <source>
        <strain>SL483</strain>
    </source>
</reference>
<dbReference type="EMBL" id="CP001138">
    <property type="protein sequence ID" value="ACH51775.1"/>
    <property type="molecule type" value="Genomic_DNA"/>
</dbReference>
<dbReference type="RefSeq" id="WP_001240053.1">
    <property type="nucleotide sequence ID" value="NC_011149.1"/>
</dbReference>
<dbReference type="SMR" id="B5F7N8"/>
<dbReference type="KEGG" id="sea:SeAg_B3569"/>
<dbReference type="HOGENOM" id="CLU_080662_1_0_6"/>
<dbReference type="Proteomes" id="UP000008819">
    <property type="component" value="Chromosome"/>
</dbReference>
<dbReference type="GO" id="GO:0005886">
    <property type="term" value="C:plasma membrane"/>
    <property type="evidence" value="ECO:0007669"/>
    <property type="project" value="UniProtKB-SubCell"/>
</dbReference>
<dbReference type="GO" id="GO:0009055">
    <property type="term" value="F:electron transfer activity"/>
    <property type="evidence" value="ECO:0007669"/>
    <property type="project" value="UniProtKB-UniRule"/>
</dbReference>
<dbReference type="GO" id="GO:0010181">
    <property type="term" value="F:FMN binding"/>
    <property type="evidence" value="ECO:0007669"/>
    <property type="project" value="UniProtKB-UniRule"/>
</dbReference>
<dbReference type="GO" id="GO:0020037">
    <property type="term" value="F:heme binding"/>
    <property type="evidence" value="ECO:0007669"/>
    <property type="project" value="UniProtKB-UniRule"/>
</dbReference>
<dbReference type="GO" id="GO:0046872">
    <property type="term" value="F:metal ion binding"/>
    <property type="evidence" value="ECO:0007669"/>
    <property type="project" value="UniProtKB-KW"/>
</dbReference>
<dbReference type="GO" id="GO:0016679">
    <property type="term" value="F:oxidoreductase activity, acting on diphenols and related substances as donors"/>
    <property type="evidence" value="ECO:0007669"/>
    <property type="project" value="TreeGrafter"/>
</dbReference>
<dbReference type="GO" id="GO:0030091">
    <property type="term" value="P:protein repair"/>
    <property type="evidence" value="ECO:0007669"/>
    <property type="project" value="UniProtKB-UniRule"/>
</dbReference>
<dbReference type="HAMAP" id="MF_01207">
    <property type="entry name" value="MsrQ"/>
    <property type="match status" value="1"/>
</dbReference>
<dbReference type="InterPro" id="IPR013130">
    <property type="entry name" value="Fe3_Rdtase_TM_dom"/>
</dbReference>
<dbReference type="InterPro" id="IPR022837">
    <property type="entry name" value="MsrQ-like"/>
</dbReference>
<dbReference type="NCBIfam" id="NF003831">
    <property type="entry name" value="PRK05419.1-2"/>
    <property type="match status" value="1"/>
</dbReference>
<dbReference type="NCBIfam" id="NF003832">
    <property type="entry name" value="PRK05419.1-4"/>
    <property type="match status" value="1"/>
</dbReference>
<dbReference type="PANTHER" id="PTHR36964">
    <property type="entry name" value="PROTEIN-METHIONINE-SULFOXIDE REDUCTASE HEME-BINDING SUBUNIT MSRQ"/>
    <property type="match status" value="1"/>
</dbReference>
<dbReference type="PANTHER" id="PTHR36964:SF1">
    <property type="entry name" value="PROTEIN-METHIONINE-SULFOXIDE REDUCTASE HEME-BINDING SUBUNIT MSRQ"/>
    <property type="match status" value="1"/>
</dbReference>
<dbReference type="Pfam" id="PF01794">
    <property type="entry name" value="Ferric_reduct"/>
    <property type="match status" value="1"/>
</dbReference>
<accession>B5F7N8</accession>
<name>MSRQ_SALA4</name>
<sequence length="199" mass="22868">MRLTAKQITWLKVCLHLAGFLPLLWLFWAINHGGLSADPVKDIQHFTGRTALKFLLATLLVSPLARYAKQPLLIRTRRLLGLWCFVWATLHLTSYALLELGIHNLALLGSELISRPYLTLGIISWLVLLALTLTSTQFAQRKLGKRWQTLHNVVYLVAILAPIHYLWSVKILSPQPVIYAALALALLALRYRKFRQWWR</sequence>
<protein>
    <recommendedName>
        <fullName evidence="1">Protein-methionine-sulfoxide reductase heme-binding subunit MsrQ</fullName>
    </recommendedName>
    <alternativeName>
        <fullName evidence="1">Flavocytochrome MsrQ</fullName>
    </alternativeName>
</protein>
<comment type="function">
    <text evidence="1">Part of the MsrPQ system that repairs oxidized periplasmic proteins containing methionine sulfoxide residues (Met-O), using respiratory chain electrons. Thus protects these proteins from oxidative-stress damage caused by reactive species of oxygen and chlorine generated by the host defense mechanisms. MsrPQ is essential for the maintenance of envelope integrity under bleach stress, rescuing a wide series of structurally unrelated periplasmic proteins from methionine oxidation, including the primary periplasmic chaperone SurA and the lipoprotein Pal. MsrQ provides electrons for reduction to the reductase catalytic subunit MsrP, using the quinone pool of the respiratory chain.</text>
</comment>
<comment type="cofactor">
    <cofactor evidence="1">
        <name>FMN</name>
        <dbReference type="ChEBI" id="CHEBI:58210"/>
    </cofactor>
    <text evidence="1">Binds 1 FMN per subunit.</text>
</comment>
<comment type="cofactor">
    <cofactor evidence="1">
        <name>heme b</name>
        <dbReference type="ChEBI" id="CHEBI:60344"/>
    </cofactor>
    <text evidence="1">Binds 1 heme b (iron(II)-protoporphyrin IX) group per subunit.</text>
</comment>
<comment type="subunit">
    <text evidence="1">Heterodimer of a catalytic subunit (MsrP) and a heme-binding subunit (MsrQ).</text>
</comment>
<comment type="subcellular location">
    <subcellularLocation>
        <location evidence="1">Cell inner membrane</location>
        <topology evidence="1">Multi-pass membrane protein</topology>
    </subcellularLocation>
</comment>
<comment type="similarity">
    <text evidence="1">Belongs to the MsrQ family.</text>
</comment>
<evidence type="ECO:0000255" key="1">
    <source>
        <dbReference type="HAMAP-Rule" id="MF_01207"/>
    </source>
</evidence>
<keyword id="KW-0997">Cell inner membrane</keyword>
<keyword id="KW-1003">Cell membrane</keyword>
<keyword id="KW-0249">Electron transport</keyword>
<keyword id="KW-0285">Flavoprotein</keyword>
<keyword id="KW-0288">FMN</keyword>
<keyword id="KW-0349">Heme</keyword>
<keyword id="KW-0408">Iron</keyword>
<keyword id="KW-0472">Membrane</keyword>
<keyword id="KW-0479">Metal-binding</keyword>
<keyword id="KW-0812">Transmembrane</keyword>
<keyword id="KW-1133">Transmembrane helix</keyword>
<keyword id="KW-0813">Transport</keyword>
<organism>
    <name type="scientific">Salmonella agona (strain SL483)</name>
    <dbReference type="NCBI Taxonomy" id="454166"/>
    <lineage>
        <taxon>Bacteria</taxon>
        <taxon>Pseudomonadati</taxon>
        <taxon>Pseudomonadota</taxon>
        <taxon>Gammaproteobacteria</taxon>
        <taxon>Enterobacterales</taxon>
        <taxon>Enterobacteriaceae</taxon>
        <taxon>Salmonella</taxon>
    </lineage>
</organism>
<gene>
    <name evidence="1" type="primary">msrQ</name>
    <name type="ordered locus">SeAg_B3569</name>
</gene>
<proteinExistence type="inferred from homology"/>